<comment type="function">
    <text evidence="1">Probably part of the ABC transporter Dpp involved in dipeptide transport. Responsible for the translocation of the substrate across the membrane.</text>
</comment>
<comment type="subcellular location">
    <subcellularLocation>
        <location evidence="4">Cell membrane</location>
        <topology evidence="2">Multi-pass membrane protein</topology>
    </subcellularLocation>
</comment>
<comment type="similarity">
    <text evidence="4">Belongs to the binding-protein-dependent transport system permease family. OppBC subfamily.</text>
</comment>
<feature type="chain" id="PRO_0000060002" description="Dipeptide transport system permease protein DppC">
    <location>
        <begin position="1"/>
        <end position="304"/>
    </location>
</feature>
<feature type="transmembrane region" description="Helical" evidence="2">
    <location>
        <begin position="41"/>
        <end position="61"/>
    </location>
</feature>
<feature type="transmembrane region" description="Helical" evidence="2">
    <location>
        <begin position="108"/>
        <end position="128"/>
    </location>
</feature>
<feature type="transmembrane region" description="Helical" evidence="2">
    <location>
        <begin position="141"/>
        <end position="161"/>
    </location>
</feature>
<feature type="transmembrane region" description="Helical" evidence="2">
    <location>
        <begin position="164"/>
        <end position="184"/>
    </location>
</feature>
<feature type="transmembrane region" description="Helical" evidence="2">
    <location>
        <begin position="227"/>
        <end position="247"/>
    </location>
</feature>
<feature type="transmembrane region" description="Helical" evidence="2">
    <location>
        <begin position="271"/>
        <end position="291"/>
    </location>
</feature>
<feature type="domain" description="ABC transmembrane type-1" evidence="2">
    <location>
        <begin position="102"/>
        <end position="291"/>
    </location>
</feature>
<feature type="region of interest" description="Disordered" evidence="3">
    <location>
        <begin position="1"/>
        <end position="24"/>
    </location>
</feature>
<evidence type="ECO:0000250" key="1">
    <source>
        <dbReference type="UniProtKB" id="P26904"/>
    </source>
</evidence>
<evidence type="ECO:0000255" key="2">
    <source>
        <dbReference type="PROSITE-ProRule" id="PRU00441"/>
    </source>
</evidence>
<evidence type="ECO:0000256" key="3">
    <source>
        <dbReference type="SAM" id="MobiDB-lite"/>
    </source>
</evidence>
<evidence type="ECO:0000305" key="4"/>
<dbReference type="EMBL" id="U64514">
    <property type="protein sequence ID" value="AAB41690.1"/>
    <property type="molecule type" value="Genomic_DNA"/>
</dbReference>
<dbReference type="EMBL" id="CP001878">
    <property type="protein sequence ID" value="ADC49211.1"/>
    <property type="molecule type" value="Genomic_DNA"/>
</dbReference>
<dbReference type="PIR" id="T44637">
    <property type="entry name" value="T44637"/>
</dbReference>
<dbReference type="RefSeq" id="WP_012960484.1">
    <property type="nucleotide sequence ID" value="NC_013791.2"/>
</dbReference>
<dbReference type="SMR" id="P94312"/>
<dbReference type="STRING" id="398511.BpOF4_05745"/>
<dbReference type="KEGG" id="bpf:BpOF4_05745"/>
<dbReference type="eggNOG" id="COG1173">
    <property type="taxonomic scope" value="Bacteria"/>
</dbReference>
<dbReference type="HOGENOM" id="CLU_028518_1_1_9"/>
<dbReference type="Proteomes" id="UP000001544">
    <property type="component" value="Chromosome"/>
</dbReference>
<dbReference type="GO" id="GO:0005886">
    <property type="term" value="C:plasma membrane"/>
    <property type="evidence" value="ECO:0007669"/>
    <property type="project" value="UniProtKB-SubCell"/>
</dbReference>
<dbReference type="GO" id="GO:0015833">
    <property type="term" value="P:peptide transport"/>
    <property type="evidence" value="ECO:0007669"/>
    <property type="project" value="UniProtKB-KW"/>
</dbReference>
<dbReference type="GO" id="GO:0015031">
    <property type="term" value="P:protein transport"/>
    <property type="evidence" value="ECO:0007669"/>
    <property type="project" value="UniProtKB-KW"/>
</dbReference>
<dbReference type="GO" id="GO:0055085">
    <property type="term" value="P:transmembrane transport"/>
    <property type="evidence" value="ECO:0007669"/>
    <property type="project" value="InterPro"/>
</dbReference>
<dbReference type="CDD" id="cd06261">
    <property type="entry name" value="TM_PBP2"/>
    <property type="match status" value="1"/>
</dbReference>
<dbReference type="Gene3D" id="1.10.3720.10">
    <property type="entry name" value="MetI-like"/>
    <property type="match status" value="1"/>
</dbReference>
<dbReference type="InterPro" id="IPR053385">
    <property type="entry name" value="ABC_transport_permease"/>
</dbReference>
<dbReference type="InterPro" id="IPR050366">
    <property type="entry name" value="BP-dependent_transpt_permease"/>
</dbReference>
<dbReference type="InterPro" id="IPR000515">
    <property type="entry name" value="MetI-like"/>
</dbReference>
<dbReference type="InterPro" id="IPR035906">
    <property type="entry name" value="MetI-like_sf"/>
</dbReference>
<dbReference type="InterPro" id="IPR025966">
    <property type="entry name" value="OppC_N"/>
</dbReference>
<dbReference type="NCBIfam" id="NF045474">
    <property type="entry name" value="Opp2C"/>
    <property type="match status" value="1"/>
</dbReference>
<dbReference type="PANTHER" id="PTHR43386:SF1">
    <property type="entry name" value="D,D-DIPEPTIDE TRANSPORT SYSTEM PERMEASE PROTEIN DDPC-RELATED"/>
    <property type="match status" value="1"/>
</dbReference>
<dbReference type="PANTHER" id="PTHR43386">
    <property type="entry name" value="OLIGOPEPTIDE TRANSPORT SYSTEM PERMEASE PROTEIN APPC"/>
    <property type="match status" value="1"/>
</dbReference>
<dbReference type="Pfam" id="PF00528">
    <property type="entry name" value="BPD_transp_1"/>
    <property type="match status" value="1"/>
</dbReference>
<dbReference type="Pfam" id="PF12911">
    <property type="entry name" value="OppC_N"/>
    <property type="match status" value="1"/>
</dbReference>
<dbReference type="SUPFAM" id="SSF161098">
    <property type="entry name" value="MetI-like"/>
    <property type="match status" value="1"/>
</dbReference>
<dbReference type="PROSITE" id="PS50928">
    <property type="entry name" value="ABC_TM1"/>
    <property type="match status" value="1"/>
</dbReference>
<keyword id="KW-1003">Cell membrane</keyword>
<keyword id="KW-0472">Membrane</keyword>
<keyword id="KW-0571">Peptide transport</keyword>
<keyword id="KW-0653">Protein transport</keyword>
<keyword id="KW-1185">Reference proteome</keyword>
<keyword id="KW-0812">Transmembrane</keyword>
<keyword id="KW-1133">Transmembrane helix</keyword>
<keyword id="KW-0813">Transport</keyword>
<name>DPPC_ALKPO</name>
<sequence length="304" mass="33144">MKTEHAKPLMTPEPNSPPPEDQYTAVSPWREAFKQLKKNKLAIVGLIIITSFILIAIFAPLLTSSSYAETNPSNRLQGPSAEHWFGTDDFGRDIFTRIVYGARLSLQVGFFAVTGALIFGTTLGLIAGYYGRWIDMLISRIFDIMLAFPSILLAIAIVAILGPSLQNALIAIAIVNVPIFGRLVRSKVISLREEEFIMAAKAQGMKNGRIIFHHILPNSLAPIIVQATLGFGTAILEAAALGFLGLGAQAPMPEWGKMLSDSRQFIQSAPWTVLFPGFSIMLVVLGFNMIGDGLRDALDPKMKS</sequence>
<gene>
    <name type="primary">dppC</name>
    <name type="ordered locus">BpOF4_05745</name>
</gene>
<organism>
    <name type="scientific">Alkalihalophilus pseudofirmus (strain ATCC BAA-2126 / JCM 17055 / OF4)</name>
    <name type="common">Bacillus pseudofirmus</name>
    <dbReference type="NCBI Taxonomy" id="398511"/>
    <lineage>
        <taxon>Bacteria</taxon>
        <taxon>Bacillati</taxon>
        <taxon>Bacillota</taxon>
        <taxon>Bacilli</taxon>
        <taxon>Bacillales</taxon>
        <taxon>Bacillaceae</taxon>
        <taxon>Alkalihalophilus</taxon>
    </lineage>
</organism>
<reference key="1">
    <citation type="journal article" date="1997" name="Extremophiles">
        <title>Diverse genes of alkaliphilic Bacillus firmus OF4 that complement K+-uptake-deficient Escherichia coli include an ftsH homologue.</title>
        <authorList>
            <person name="Ito M."/>
            <person name="Cooperberg B."/>
            <person name="Krulwich T.A."/>
        </authorList>
    </citation>
    <scope>NUCLEOTIDE SEQUENCE [GENOMIC DNA]</scope>
</reference>
<reference key="2">
    <citation type="journal article" date="2011" name="Environ. Microbiol.">
        <title>Genome of alkaliphilic Bacillus pseudofirmus OF4 reveals adaptations that support the ability to grow in an external pH range from 7.5 to 11.4.</title>
        <authorList>
            <person name="Janto B."/>
            <person name="Ahmed A."/>
            <person name="Ito M."/>
            <person name="Liu J."/>
            <person name="Hicks D.B."/>
            <person name="Pagni S."/>
            <person name="Fackelmayer O.J."/>
            <person name="Smith T.A."/>
            <person name="Earl J."/>
            <person name="Elbourne L.D."/>
            <person name="Hassan K."/>
            <person name="Paulsen I.T."/>
            <person name="Kolsto A.B."/>
            <person name="Tourasse N.J."/>
            <person name="Ehrlich G.D."/>
            <person name="Boissy R."/>
            <person name="Ivey D.M."/>
            <person name="Li G."/>
            <person name="Xue Y."/>
            <person name="Ma Y."/>
            <person name="Hu F.Z."/>
            <person name="Krulwich T.A."/>
        </authorList>
    </citation>
    <scope>NUCLEOTIDE SEQUENCE [LARGE SCALE GENOMIC DNA]</scope>
    <source>
        <strain>ATCC BAA-2126 / JCM 17055 / OF4</strain>
    </source>
</reference>
<protein>
    <recommendedName>
        <fullName>Dipeptide transport system permease protein DppC</fullName>
    </recommendedName>
</protein>
<accession>P94312</accession>
<accession>D3FZG9</accession>
<proteinExistence type="inferred from homology"/>